<organism evidence="10">
    <name type="scientific">Bos taurus</name>
    <name type="common">Bovine</name>
    <dbReference type="NCBI Taxonomy" id="9913"/>
    <lineage>
        <taxon>Eukaryota</taxon>
        <taxon>Metazoa</taxon>
        <taxon>Chordata</taxon>
        <taxon>Craniata</taxon>
        <taxon>Vertebrata</taxon>
        <taxon>Euteleostomi</taxon>
        <taxon>Mammalia</taxon>
        <taxon>Eutheria</taxon>
        <taxon>Laurasiatheria</taxon>
        <taxon>Artiodactyla</taxon>
        <taxon>Ruminantia</taxon>
        <taxon>Pecora</taxon>
        <taxon>Bovidae</taxon>
        <taxon>Bovinae</taxon>
        <taxon>Bos</taxon>
    </lineage>
</organism>
<dbReference type="EC" id="3.6.5.-" evidence="1"/>
<dbReference type="EMBL" id="BT021034">
    <property type="protein sequence ID" value="AAX09051.1"/>
    <property type="molecule type" value="mRNA"/>
</dbReference>
<dbReference type="EMBL" id="BC118199">
    <property type="protein sequence ID" value="AAI18200.1"/>
    <property type="molecule type" value="mRNA"/>
</dbReference>
<dbReference type="RefSeq" id="NP_001071626.1">
    <property type="nucleotide sequence ID" value="NM_001078158.1"/>
</dbReference>
<dbReference type="SMR" id="P81948"/>
<dbReference type="CORUM" id="P81948"/>
<dbReference type="FunCoup" id="P81948">
    <property type="interactions" value="1087"/>
</dbReference>
<dbReference type="IntAct" id="P81948">
    <property type="interactions" value="8"/>
</dbReference>
<dbReference type="MINT" id="P81948"/>
<dbReference type="STRING" id="9913.ENSBTAP00000065307"/>
<dbReference type="PaxDb" id="9913-ENSBTAP00000003192"/>
<dbReference type="PeptideAtlas" id="P81948"/>
<dbReference type="GeneID" id="777775"/>
<dbReference type="KEGG" id="bta:777775"/>
<dbReference type="CTD" id="7277"/>
<dbReference type="VEuPathDB" id="HostDB:ENSBTAG00000030974"/>
<dbReference type="eggNOG" id="KOG1376">
    <property type="taxonomic scope" value="Eukaryota"/>
</dbReference>
<dbReference type="HOGENOM" id="CLU_015718_0_0_1"/>
<dbReference type="InParanoid" id="P81948"/>
<dbReference type="OMA" id="RRVTDNC"/>
<dbReference type="OrthoDB" id="1844at2759"/>
<dbReference type="TreeFam" id="TF300314"/>
<dbReference type="Reactome" id="R-BTA-114608">
    <property type="pathway name" value="Platelet degranulation"/>
</dbReference>
<dbReference type="Reactome" id="R-BTA-190840">
    <property type="pathway name" value="Microtubule-dependent trafficking of connexons from Golgi to the plasma membrane"/>
</dbReference>
<dbReference type="Reactome" id="R-BTA-2132295">
    <property type="pathway name" value="MHC class II antigen presentation"/>
</dbReference>
<dbReference type="Reactome" id="R-BTA-2467813">
    <property type="pathway name" value="Separation of Sister Chromatids"/>
</dbReference>
<dbReference type="Reactome" id="R-BTA-2500257">
    <property type="pathway name" value="Resolution of Sister Chromatid Cohesion"/>
</dbReference>
<dbReference type="Reactome" id="R-BTA-2565942">
    <property type="pathway name" value="Regulation of PLK1 Activity at G2/M Transition"/>
</dbReference>
<dbReference type="Reactome" id="R-BTA-3371497">
    <property type="pathway name" value="HSP90 chaperone cycle for steroid hormone receptors (SHR) in the presence of ligand"/>
</dbReference>
<dbReference type="Reactome" id="R-BTA-380259">
    <property type="pathway name" value="Loss of Nlp from mitotic centrosomes"/>
</dbReference>
<dbReference type="Reactome" id="R-BTA-380270">
    <property type="pathway name" value="Recruitment of mitotic centrosome proteins and complexes"/>
</dbReference>
<dbReference type="Reactome" id="R-BTA-380284">
    <property type="pathway name" value="Loss of proteins required for interphase microtubule organization from the centrosome"/>
</dbReference>
<dbReference type="Reactome" id="R-BTA-380320">
    <property type="pathway name" value="Recruitment of NuMA to mitotic centrosomes"/>
</dbReference>
<dbReference type="Reactome" id="R-BTA-5610787">
    <property type="pathway name" value="Hedgehog 'off' state"/>
</dbReference>
<dbReference type="Reactome" id="R-BTA-5617833">
    <property type="pathway name" value="Cilium Assembly"/>
</dbReference>
<dbReference type="Reactome" id="R-BTA-5620912">
    <property type="pathway name" value="Anchoring of the basal body to the plasma membrane"/>
</dbReference>
<dbReference type="Reactome" id="R-BTA-5620924">
    <property type="pathway name" value="Intraflagellar transport"/>
</dbReference>
<dbReference type="Reactome" id="R-BTA-5626467">
    <property type="pathway name" value="RHO GTPases activate IQGAPs"/>
</dbReference>
<dbReference type="Reactome" id="R-BTA-5663220">
    <property type="pathway name" value="RHO GTPases Activate Formins"/>
</dbReference>
<dbReference type="Reactome" id="R-BTA-6807878">
    <property type="pathway name" value="COPI-mediated anterograde transport"/>
</dbReference>
<dbReference type="Reactome" id="R-BTA-6811434">
    <property type="pathway name" value="COPI-dependent Golgi-to-ER retrograde traffic"/>
</dbReference>
<dbReference type="Reactome" id="R-BTA-6811436">
    <property type="pathway name" value="COPI-independent Golgi-to-ER retrograde traffic"/>
</dbReference>
<dbReference type="Reactome" id="R-BTA-68877">
    <property type="pathway name" value="Mitotic Prometaphase"/>
</dbReference>
<dbReference type="Reactome" id="R-BTA-8852276">
    <property type="pathway name" value="The role of GTSE1 in G2/M progression after G2 checkpoint"/>
</dbReference>
<dbReference type="Reactome" id="R-BTA-8854518">
    <property type="pathway name" value="AURKA Activation by TPX2"/>
</dbReference>
<dbReference type="Reactome" id="R-BTA-8955332">
    <property type="pathway name" value="Carboxyterminal post-translational modifications of tubulin"/>
</dbReference>
<dbReference type="Reactome" id="R-BTA-9646399">
    <property type="pathway name" value="Aggrephagy"/>
</dbReference>
<dbReference type="Reactome" id="R-BTA-9648025">
    <property type="pathway name" value="EML4 and NUDC in mitotic spindle formation"/>
</dbReference>
<dbReference type="Reactome" id="R-BTA-9668328">
    <property type="pathway name" value="Sealing of the nuclear envelope (NE) by ESCRT-III"/>
</dbReference>
<dbReference type="Reactome" id="R-BTA-983189">
    <property type="pathway name" value="Kinesins"/>
</dbReference>
<dbReference type="Proteomes" id="UP000009136">
    <property type="component" value="Chromosome 2"/>
</dbReference>
<dbReference type="Bgee" id="ENSBTAG00000030974">
    <property type="expression patterns" value="Expressed in choroid plexus and 104 other cell types or tissues"/>
</dbReference>
<dbReference type="GO" id="GO:0005737">
    <property type="term" value="C:cytoplasm"/>
    <property type="evidence" value="ECO:0000318"/>
    <property type="project" value="GO_Central"/>
</dbReference>
<dbReference type="GO" id="GO:0005874">
    <property type="term" value="C:microtubule"/>
    <property type="evidence" value="ECO:0000318"/>
    <property type="project" value="GO_Central"/>
</dbReference>
<dbReference type="GO" id="GO:0005525">
    <property type="term" value="F:GTP binding"/>
    <property type="evidence" value="ECO:0000318"/>
    <property type="project" value="GO_Central"/>
</dbReference>
<dbReference type="GO" id="GO:0016787">
    <property type="term" value="F:hydrolase activity"/>
    <property type="evidence" value="ECO:0007669"/>
    <property type="project" value="UniProtKB-KW"/>
</dbReference>
<dbReference type="GO" id="GO:0046872">
    <property type="term" value="F:metal ion binding"/>
    <property type="evidence" value="ECO:0007669"/>
    <property type="project" value="UniProtKB-KW"/>
</dbReference>
<dbReference type="GO" id="GO:0005200">
    <property type="term" value="F:structural constituent of cytoskeleton"/>
    <property type="evidence" value="ECO:0000318"/>
    <property type="project" value="GO_Central"/>
</dbReference>
<dbReference type="GO" id="GO:0000226">
    <property type="term" value="P:microtubule cytoskeleton organization"/>
    <property type="evidence" value="ECO:0000318"/>
    <property type="project" value="GO_Central"/>
</dbReference>
<dbReference type="GO" id="GO:0000278">
    <property type="term" value="P:mitotic cell cycle"/>
    <property type="evidence" value="ECO:0000318"/>
    <property type="project" value="GO_Central"/>
</dbReference>
<dbReference type="CDD" id="cd02186">
    <property type="entry name" value="alpha_tubulin"/>
    <property type="match status" value="1"/>
</dbReference>
<dbReference type="FunFam" id="1.10.287.600:FF:000005">
    <property type="entry name" value="Tubulin alpha chain"/>
    <property type="match status" value="1"/>
</dbReference>
<dbReference type="FunFam" id="3.30.1330.20:FF:000001">
    <property type="entry name" value="Tubulin alpha chain"/>
    <property type="match status" value="1"/>
</dbReference>
<dbReference type="FunFam" id="3.40.50.1440:FF:000002">
    <property type="entry name" value="Tubulin alpha chain"/>
    <property type="match status" value="1"/>
</dbReference>
<dbReference type="Gene3D" id="1.10.287.600">
    <property type="entry name" value="Helix hairpin bin"/>
    <property type="match status" value="1"/>
</dbReference>
<dbReference type="Gene3D" id="3.30.1330.20">
    <property type="entry name" value="Tubulin/FtsZ, C-terminal domain"/>
    <property type="match status" value="1"/>
</dbReference>
<dbReference type="Gene3D" id="3.40.50.1440">
    <property type="entry name" value="Tubulin/FtsZ, GTPase domain"/>
    <property type="match status" value="1"/>
</dbReference>
<dbReference type="InterPro" id="IPR002452">
    <property type="entry name" value="Alpha_tubulin"/>
</dbReference>
<dbReference type="InterPro" id="IPR008280">
    <property type="entry name" value="Tub_FtsZ_C"/>
</dbReference>
<dbReference type="InterPro" id="IPR000217">
    <property type="entry name" value="Tubulin"/>
</dbReference>
<dbReference type="InterPro" id="IPR037103">
    <property type="entry name" value="Tubulin/FtsZ-like_C"/>
</dbReference>
<dbReference type="InterPro" id="IPR018316">
    <property type="entry name" value="Tubulin/FtsZ_2-layer-sand-dom"/>
</dbReference>
<dbReference type="InterPro" id="IPR036525">
    <property type="entry name" value="Tubulin/FtsZ_GTPase_sf"/>
</dbReference>
<dbReference type="InterPro" id="IPR023123">
    <property type="entry name" value="Tubulin_C"/>
</dbReference>
<dbReference type="InterPro" id="IPR017975">
    <property type="entry name" value="Tubulin_CS"/>
</dbReference>
<dbReference type="InterPro" id="IPR003008">
    <property type="entry name" value="Tubulin_FtsZ_GTPase"/>
</dbReference>
<dbReference type="PANTHER" id="PTHR11588">
    <property type="entry name" value="TUBULIN"/>
    <property type="match status" value="1"/>
</dbReference>
<dbReference type="Pfam" id="PF00091">
    <property type="entry name" value="Tubulin"/>
    <property type="match status" value="1"/>
</dbReference>
<dbReference type="Pfam" id="PF03953">
    <property type="entry name" value="Tubulin_C"/>
    <property type="match status" value="1"/>
</dbReference>
<dbReference type="PRINTS" id="PR01162">
    <property type="entry name" value="ALPHATUBULIN"/>
</dbReference>
<dbReference type="PRINTS" id="PR01161">
    <property type="entry name" value="TUBULIN"/>
</dbReference>
<dbReference type="SMART" id="SM00864">
    <property type="entry name" value="Tubulin"/>
    <property type="match status" value="1"/>
</dbReference>
<dbReference type="SMART" id="SM00865">
    <property type="entry name" value="Tubulin_C"/>
    <property type="match status" value="1"/>
</dbReference>
<dbReference type="SUPFAM" id="SSF55307">
    <property type="entry name" value="Tubulin C-terminal domain-like"/>
    <property type="match status" value="1"/>
</dbReference>
<dbReference type="SUPFAM" id="SSF52490">
    <property type="entry name" value="Tubulin nucleotide-binding domain-like"/>
    <property type="match status" value="1"/>
</dbReference>
<dbReference type="PROSITE" id="PS00227">
    <property type="entry name" value="TUBULIN"/>
    <property type="match status" value="1"/>
</dbReference>
<reference key="1">
    <citation type="journal article" date="2005" name="BMC Genomics">
        <title>Characterization of 954 bovine full-CDS cDNA sequences.</title>
        <authorList>
            <person name="Harhay G.P."/>
            <person name="Sonstegard T.S."/>
            <person name="Keele J.W."/>
            <person name="Heaton M.P."/>
            <person name="Clawson M.L."/>
            <person name="Snelling W.M."/>
            <person name="Wiedmann R.T."/>
            <person name="Van Tassell C.P."/>
            <person name="Smith T.P.L."/>
        </authorList>
    </citation>
    <scope>NUCLEOTIDE SEQUENCE [LARGE SCALE MRNA]</scope>
</reference>
<reference key="2">
    <citation type="submission" date="2006-06" db="EMBL/GenBank/DDBJ databases">
        <authorList>
            <consortium name="NIH - Mammalian Gene Collection (MGC) project"/>
        </authorList>
    </citation>
    <scope>NUCLEOTIDE SEQUENCE [LARGE SCALE MRNA]</scope>
    <source>
        <strain>Hereford</strain>
        <tissue>Hippocampus</tissue>
    </source>
</reference>
<reference evidence="10" key="3">
    <citation type="journal article" date="1998" name="Biochem. Biophys. Res. Commun.">
        <title>Differential assembly kinetics of alpha-tubulin isoforms in the presence of paclitaxel.</title>
        <authorList>
            <person name="Banerjee A."/>
            <person name="Kasmala L.T."/>
        </authorList>
    </citation>
    <scope>PROTEIN SEQUENCE OF 430-448</scope>
    <source>
        <tissue>Brain cortex</tissue>
    </source>
</reference>
<reference key="4">
    <citation type="journal article" date="1984" name="Nature">
        <title>Dynamic instability of microtubule growth.</title>
        <authorList>
            <person name="Mitchison T."/>
            <person name="Kirschner M."/>
        </authorList>
    </citation>
    <scope>FUNCTION</scope>
    <scope>SUBUNIT</scope>
    <scope>SUBCELLULAR LOCATION</scope>
</reference>
<reference key="5">
    <citation type="journal article" date="1990" name="Biochemistry">
        <title>Role of GTP hydrolysis in microtubule polymerization: evidence for a coupled hydrolysis mechanism.</title>
        <authorList>
            <person name="Stewart R.J."/>
            <person name="Farrell K.W."/>
            <person name="Wilson L."/>
        </authorList>
    </citation>
    <scope>FUNCTION</scope>
    <scope>SUBUNIT</scope>
    <scope>SUBCELLULAR LOCATION</scope>
</reference>
<reference key="6">
    <citation type="journal article" date="1994" name="Curr. Biol.">
        <title>The minimum GTP cap required to stabilize microtubules.</title>
        <authorList>
            <person name="Drechsel D.N."/>
            <person name="Kirschner M.W."/>
        </authorList>
    </citation>
    <scope>FUNCTION</scope>
    <scope>SUBUNIT</scope>
    <scope>SUBCELLULAR LOCATION</scope>
</reference>
<protein>
    <recommendedName>
        <fullName>Tubulin alpha-4A chain</fullName>
        <ecNumber evidence="1">3.6.5.-</ecNumber>
    </recommendedName>
    <alternativeName>
        <fullName>Alpha-tubulin 1</fullName>
    </alternativeName>
    <alternativeName>
        <fullName>Tubulin alpha-1 chain</fullName>
    </alternativeName>
</protein>
<sequence length="448" mass="49924">MRECISVHVGQAGVQMGNACWELYCLEHGIQPDGQMPSDKTIGGGDDSFTTFFCETGAGKHVPRAVFVDLEPTVIDEIRNGPYRQLFHPEQLITGKEDAANNYARGHYTIGKEIIDPVLDRIRKLSDQCTGLQGFLVFHSFGGGTGSGFTSLLMERLSVDYGKKSKLEFSIYPAPQVSTAVVEPYNSILTTHTTLEHSDCAFMVDNEAIYDICRRNLDIERPTYTNLNRLISQIVSSITASLRFDGALNVDLTEFQTNLVPYPRIHFPLATYAPVISAEKAYHEQLSVAEITNACFEPANQMVKCDPRHGKYMACCLLYRGDVVPKDVNAAIAAIKTKRSIQFVDWCPTGFKVGINYQPPTVVPGGDLAKVQRAVCMLSNTTAIAEAWARLDHKFDLMYAKRAFVHWYVGEGMEEGEFSEAREDMAALEKDYEEVGIDSYEDEDEGEE</sequence>
<gene>
    <name type="primary">TUBA4A</name>
    <name type="synonym">TUBA1</name>
</gene>
<evidence type="ECO:0000250" key="1">
    <source>
        <dbReference type="UniProtKB" id="P68363"/>
    </source>
</evidence>
<evidence type="ECO:0000250" key="2">
    <source>
        <dbReference type="UniProtKB" id="P68366"/>
    </source>
</evidence>
<evidence type="ECO:0000250" key="3">
    <source>
        <dbReference type="UniProtKB" id="P68368"/>
    </source>
</evidence>
<evidence type="ECO:0000250" key="4">
    <source>
        <dbReference type="UniProtKB" id="Q5XIF6"/>
    </source>
</evidence>
<evidence type="ECO:0000250" key="5">
    <source>
        <dbReference type="UniProtKB" id="Q71U36"/>
    </source>
</evidence>
<evidence type="ECO:0000250" key="6">
    <source>
        <dbReference type="UniProtKB" id="Q9BQE3"/>
    </source>
</evidence>
<evidence type="ECO:0000269" key="7">
    <source>
    </source>
</evidence>
<evidence type="ECO:0000269" key="8">
    <source>
    </source>
</evidence>
<evidence type="ECO:0000269" key="9">
    <source>
    </source>
</evidence>
<evidence type="ECO:0000305" key="10"/>
<keyword id="KW-0007">Acetylation</keyword>
<keyword id="KW-0963">Cytoplasm</keyword>
<keyword id="KW-0206">Cytoskeleton</keyword>
<keyword id="KW-0903">Direct protein sequencing</keyword>
<keyword id="KW-0342">GTP-binding</keyword>
<keyword id="KW-0378">Hydrolase</keyword>
<keyword id="KW-0460">Magnesium</keyword>
<keyword id="KW-0479">Metal-binding</keyword>
<keyword id="KW-0488">Methylation</keyword>
<keyword id="KW-0493">Microtubule</keyword>
<keyword id="KW-0944">Nitration</keyword>
<keyword id="KW-0547">Nucleotide-binding</keyword>
<keyword id="KW-0597">Phosphoprotein</keyword>
<keyword id="KW-1185">Reference proteome</keyword>
<accession>P81948</accession>
<accession>Q17QT1</accession>
<accession>Q5E986</accession>
<name>TBA4A_BOVIN</name>
<comment type="function">
    <text evidence="7 8 9">Tubulin is the major constituent of microtubules, a cylinder consisting of laterally associated linear protofilaments composed of alpha- and beta-tubulin heterodimers (PubMed:2207090, PubMed:6504138, PubMed:7704569). Microtubules grow by the addition of GTP-tubulin dimers to the microtubule end, where a stabilizing cap forms. Below the cap, tubulin dimers are in GDP-bound state, owing to GTPase activity of alpha-tubulin (PubMed:2207090, PubMed:6504138, PubMed:7704569).</text>
</comment>
<comment type="catalytic activity">
    <reaction evidence="1">
        <text>GTP + H2O = GDP + phosphate + H(+)</text>
        <dbReference type="Rhea" id="RHEA:19669"/>
        <dbReference type="ChEBI" id="CHEBI:15377"/>
        <dbReference type="ChEBI" id="CHEBI:15378"/>
        <dbReference type="ChEBI" id="CHEBI:37565"/>
        <dbReference type="ChEBI" id="CHEBI:43474"/>
        <dbReference type="ChEBI" id="CHEBI:58189"/>
    </reaction>
    <physiologicalReaction direction="left-to-right" evidence="1">
        <dbReference type="Rhea" id="RHEA:19670"/>
    </physiologicalReaction>
</comment>
<comment type="cofactor">
    <cofactor evidence="1">
        <name>Mg(2+)</name>
        <dbReference type="ChEBI" id="CHEBI:18420"/>
    </cofactor>
</comment>
<comment type="subunit">
    <text evidence="7 8 9">Dimer of alpha and beta chains (PubMed:2207090, PubMed:6504138, PubMed:7704569). A typical microtubule is a hollow water-filled tube with an outer diameter of 25 nm and an inner diameter of 15 nM. Alpha-beta heterodimers associate head-to-tail to form protofilaments running lengthwise along the microtubule wall with the beta-tubulin subunit facing the microtubule plus end conferring a structural polarity. Microtubules usually have 13 protofilaments but different protofilament numbers can be found in some organisms and specialized cells.</text>
</comment>
<comment type="interaction">
    <interactant intactId="EBI-6943159">
        <id>P81948</id>
    </interactant>
    <interactant intactId="EBI-6943108">
        <id>P46065</id>
        <label>GUCA1A</label>
    </interactant>
    <organismsDiffer>false</organismsDiffer>
    <experiments>2</experiments>
</comment>
<comment type="subcellular location">
    <subcellularLocation>
        <location evidence="7 8 9">Cytoplasm</location>
        <location evidence="7 8 9">Cytoskeleton</location>
    </subcellularLocation>
</comment>
<comment type="domain">
    <text evidence="1">The MREC motif may be critical for tubulin autoregulation.</text>
</comment>
<comment type="PTM">
    <text evidence="3">Some glutamate residues at the C-terminus are polyglycylated, resulting in polyglycine chains on the gamma-carboxyl group. Glycylation is mainly limited to tubulin incorporated into axonemes (cilia and flagella) whereas glutamylation is prevalent in neuronal cells, centrioles, axonemes, and the mitotic spindle. Both modifications can coexist on the same protein on adjacent residues, and lowering polyglycylation levels increases polyglutamylation, and reciprocally. Cilia and flagella glycylation is required for their stability and maintenance. Flagella glycylation controls sperm motility.</text>
</comment>
<comment type="PTM">
    <text evidence="3 5">Some glutamate residues at the C-terminus are polyglutamylated, resulting in polyglutamate chains on the gamma-carboxyl group (By similarity). Polyglutamylation plays a key role in microtubule severing by spastin (SPAST). SPAST preferentially recognizes and acts on microtubules decorated with short polyglutamate tails: severing activity by SPAST increases as the number of glutamates per tubulin rises from one to eight, but decreases beyond this glutamylation threshold (By similarity). Glutamylation is also involved in cilia motility (By similarity).</text>
</comment>
<comment type="PTM">
    <text evidence="5">Acetylation of alpha chains at Lys-40 is located inside the microtubule lumen. This modification has been correlated with increased microtubule stability, intracellular transport and ciliary assembly.</text>
</comment>
<comment type="PTM">
    <text evidence="1">Methylation of alpha chains at Lys-40 is found in mitotic microtubules and is required for normal mitosis and cytokinesis contributing to genomic stability.</text>
</comment>
<comment type="PTM">
    <text evidence="2">Although this tubulin does not encode a C-terminal tyrosine, a C-terminal tyrosine can be added post-translationally by the tubulin tyrosine ligase (TTL). It can then undergo a detyrosination cycle by the tubulin tyrosine carboxypeptidase (MATCAP1/KIAA0895L).</text>
</comment>
<comment type="miscellaneous">
    <text evidence="10">This tubulin does not have a C-terminal tyrosine.</text>
</comment>
<comment type="similarity">
    <text evidence="10">Belongs to the tubulin family.</text>
</comment>
<proteinExistence type="evidence at protein level"/>
<feature type="chain" id="PRO_0000048115" description="Tubulin alpha-4A chain">
    <location>
        <begin position="1"/>
        <end position="448"/>
    </location>
</feature>
<feature type="short sequence motif" description="MREC motif" evidence="1">
    <location>
        <begin position="1"/>
        <end position="4"/>
    </location>
</feature>
<feature type="active site" evidence="1">
    <location>
        <position position="254"/>
    </location>
</feature>
<feature type="binding site" evidence="1">
    <location>
        <position position="11"/>
    </location>
    <ligand>
        <name>GTP</name>
        <dbReference type="ChEBI" id="CHEBI:37565"/>
    </ligand>
</feature>
<feature type="binding site" evidence="1">
    <location>
        <position position="71"/>
    </location>
    <ligand>
        <name>GTP</name>
        <dbReference type="ChEBI" id="CHEBI:37565"/>
    </ligand>
</feature>
<feature type="binding site" evidence="1">
    <location>
        <position position="71"/>
    </location>
    <ligand>
        <name>Mg(2+)</name>
        <dbReference type="ChEBI" id="CHEBI:18420"/>
    </ligand>
</feature>
<feature type="binding site" evidence="1">
    <location>
        <position position="140"/>
    </location>
    <ligand>
        <name>GTP</name>
        <dbReference type="ChEBI" id="CHEBI:37565"/>
    </ligand>
</feature>
<feature type="binding site" evidence="1">
    <location>
        <position position="144"/>
    </location>
    <ligand>
        <name>GTP</name>
        <dbReference type="ChEBI" id="CHEBI:37565"/>
    </ligand>
</feature>
<feature type="binding site" evidence="1">
    <location>
        <position position="145"/>
    </location>
    <ligand>
        <name>GTP</name>
        <dbReference type="ChEBI" id="CHEBI:37565"/>
    </ligand>
</feature>
<feature type="binding site" evidence="1">
    <location>
        <position position="179"/>
    </location>
    <ligand>
        <name>GTP</name>
        <dbReference type="ChEBI" id="CHEBI:37565"/>
    </ligand>
</feature>
<feature type="binding site" evidence="1">
    <location>
        <position position="206"/>
    </location>
    <ligand>
        <name>GTP</name>
        <dbReference type="ChEBI" id="CHEBI:37565"/>
    </ligand>
</feature>
<feature type="binding site" evidence="1">
    <location>
        <position position="228"/>
    </location>
    <ligand>
        <name>GTP</name>
        <dbReference type="ChEBI" id="CHEBI:37565"/>
    </ligand>
</feature>
<feature type="modified residue" description="N6-acetyllysine" evidence="2">
    <location>
        <position position="40"/>
    </location>
</feature>
<feature type="modified residue" description="Phosphoserine" evidence="2">
    <location>
        <position position="48"/>
    </location>
</feature>
<feature type="modified residue" description="3'-nitrotyrosine" evidence="3">
    <location>
        <position position="83"/>
    </location>
</feature>
<feature type="modified residue" description="Phosphotyrosine" evidence="6">
    <location>
        <position position="432"/>
    </location>
</feature>
<feature type="modified residue" description="Phosphoserine" evidence="4">
    <location>
        <position position="439"/>
    </location>
</feature>